<name>RL19_HAEIG</name>
<sequence>MSNIIKQLEQEQLKQNVPSFRPGDTLEVKVWVVEGSKRRLQAFEGVVIAIRNRGLHSAFTLRKVSNGVGVERVFQTHSPAVDSIAVKRKGAVRKAKLYYLRERSGKSARIKERLGA</sequence>
<organism>
    <name type="scientific">Haemophilus influenzae (strain PittGG)</name>
    <dbReference type="NCBI Taxonomy" id="374931"/>
    <lineage>
        <taxon>Bacteria</taxon>
        <taxon>Pseudomonadati</taxon>
        <taxon>Pseudomonadota</taxon>
        <taxon>Gammaproteobacteria</taxon>
        <taxon>Pasteurellales</taxon>
        <taxon>Pasteurellaceae</taxon>
        <taxon>Haemophilus</taxon>
    </lineage>
</organism>
<accession>A5UG03</accession>
<evidence type="ECO:0000255" key="1">
    <source>
        <dbReference type="HAMAP-Rule" id="MF_00402"/>
    </source>
</evidence>
<evidence type="ECO:0000305" key="2"/>
<dbReference type="EMBL" id="CP000672">
    <property type="protein sequence ID" value="ABQ99708.1"/>
    <property type="molecule type" value="Genomic_DNA"/>
</dbReference>
<dbReference type="SMR" id="A5UG03"/>
<dbReference type="KEGG" id="hiq:CGSHiGG_03620"/>
<dbReference type="HOGENOM" id="CLU_103507_2_2_6"/>
<dbReference type="Proteomes" id="UP000001990">
    <property type="component" value="Chromosome"/>
</dbReference>
<dbReference type="GO" id="GO:0022625">
    <property type="term" value="C:cytosolic large ribosomal subunit"/>
    <property type="evidence" value="ECO:0007669"/>
    <property type="project" value="TreeGrafter"/>
</dbReference>
<dbReference type="GO" id="GO:0003735">
    <property type="term" value="F:structural constituent of ribosome"/>
    <property type="evidence" value="ECO:0007669"/>
    <property type="project" value="InterPro"/>
</dbReference>
<dbReference type="GO" id="GO:0006412">
    <property type="term" value="P:translation"/>
    <property type="evidence" value="ECO:0007669"/>
    <property type="project" value="UniProtKB-UniRule"/>
</dbReference>
<dbReference type="FunFam" id="2.30.30.790:FF:000001">
    <property type="entry name" value="50S ribosomal protein L19"/>
    <property type="match status" value="1"/>
</dbReference>
<dbReference type="Gene3D" id="2.30.30.790">
    <property type="match status" value="1"/>
</dbReference>
<dbReference type="HAMAP" id="MF_00402">
    <property type="entry name" value="Ribosomal_bL19"/>
    <property type="match status" value="1"/>
</dbReference>
<dbReference type="InterPro" id="IPR001857">
    <property type="entry name" value="Ribosomal_bL19"/>
</dbReference>
<dbReference type="InterPro" id="IPR018257">
    <property type="entry name" value="Ribosomal_bL19_CS"/>
</dbReference>
<dbReference type="InterPro" id="IPR038657">
    <property type="entry name" value="Ribosomal_bL19_sf"/>
</dbReference>
<dbReference type="InterPro" id="IPR008991">
    <property type="entry name" value="Translation_prot_SH3-like_sf"/>
</dbReference>
<dbReference type="NCBIfam" id="TIGR01024">
    <property type="entry name" value="rplS_bact"/>
    <property type="match status" value="1"/>
</dbReference>
<dbReference type="PANTHER" id="PTHR15680:SF9">
    <property type="entry name" value="LARGE RIBOSOMAL SUBUNIT PROTEIN BL19M"/>
    <property type="match status" value="1"/>
</dbReference>
<dbReference type="PANTHER" id="PTHR15680">
    <property type="entry name" value="RIBOSOMAL PROTEIN L19"/>
    <property type="match status" value="1"/>
</dbReference>
<dbReference type="Pfam" id="PF01245">
    <property type="entry name" value="Ribosomal_L19"/>
    <property type="match status" value="1"/>
</dbReference>
<dbReference type="PIRSF" id="PIRSF002191">
    <property type="entry name" value="Ribosomal_L19"/>
    <property type="match status" value="1"/>
</dbReference>
<dbReference type="PRINTS" id="PR00061">
    <property type="entry name" value="RIBOSOMALL19"/>
</dbReference>
<dbReference type="SUPFAM" id="SSF50104">
    <property type="entry name" value="Translation proteins SH3-like domain"/>
    <property type="match status" value="1"/>
</dbReference>
<dbReference type="PROSITE" id="PS01015">
    <property type="entry name" value="RIBOSOMAL_L19"/>
    <property type="match status" value="1"/>
</dbReference>
<protein>
    <recommendedName>
        <fullName evidence="1">Large ribosomal subunit protein bL19</fullName>
    </recommendedName>
    <alternativeName>
        <fullName evidence="2">50S ribosomal protein L19</fullName>
    </alternativeName>
</protein>
<comment type="function">
    <text evidence="1">This protein is located at the 30S-50S ribosomal subunit interface and may play a role in the structure and function of the aminoacyl-tRNA binding site.</text>
</comment>
<comment type="similarity">
    <text evidence="1">Belongs to the bacterial ribosomal protein bL19 family.</text>
</comment>
<gene>
    <name evidence="1" type="primary">rplS</name>
    <name type="ordered locus">CGSHiGG_03620</name>
</gene>
<reference key="1">
    <citation type="journal article" date="2007" name="Genome Biol.">
        <title>Characterization and modeling of the Haemophilus influenzae core and supragenomes based on the complete genomic sequences of Rd and 12 clinical nontypeable strains.</title>
        <authorList>
            <person name="Hogg J.S."/>
            <person name="Hu F.Z."/>
            <person name="Janto B."/>
            <person name="Boissy R."/>
            <person name="Hayes J."/>
            <person name="Keefe R."/>
            <person name="Post J.C."/>
            <person name="Ehrlich G.D."/>
        </authorList>
    </citation>
    <scope>NUCLEOTIDE SEQUENCE [LARGE SCALE GENOMIC DNA]</scope>
    <source>
        <strain>PittGG</strain>
    </source>
</reference>
<keyword id="KW-0687">Ribonucleoprotein</keyword>
<keyword id="KW-0689">Ribosomal protein</keyword>
<feature type="chain" id="PRO_1000049684" description="Large ribosomal subunit protein bL19">
    <location>
        <begin position="1"/>
        <end position="116"/>
    </location>
</feature>
<proteinExistence type="inferred from homology"/>